<name>DAPF_MYCLE</name>
<reference key="1">
    <citation type="submission" date="1994-03" db="EMBL/GenBank/DDBJ databases">
        <authorList>
            <person name="Smith D.R."/>
            <person name="Robison K."/>
        </authorList>
    </citation>
    <scope>NUCLEOTIDE SEQUENCE [GENOMIC DNA]</scope>
</reference>
<reference key="2">
    <citation type="journal article" date="2001" name="Nature">
        <title>Massive gene decay in the leprosy bacillus.</title>
        <authorList>
            <person name="Cole S.T."/>
            <person name="Eiglmeier K."/>
            <person name="Parkhill J."/>
            <person name="James K.D."/>
            <person name="Thomson N.R."/>
            <person name="Wheeler P.R."/>
            <person name="Honore N."/>
            <person name="Garnier T."/>
            <person name="Churcher C.M."/>
            <person name="Harris D.E."/>
            <person name="Mungall K.L."/>
            <person name="Basham D."/>
            <person name="Brown D."/>
            <person name="Chillingworth T."/>
            <person name="Connor R."/>
            <person name="Davies R.M."/>
            <person name="Devlin K."/>
            <person name="Duthoy S."/>
            <person name="Feltwell T."/>
            <person name="Fraser A."/>
            <person name="Hamlin N."/>
            <person name="Holroyd S."/>
            <person name="Hornsby T."/>
            <person name="Jagels K."/>
            <person name="Lacroix C."/>
            <person name="Maclean J."/>
            <person name="Moule S."/>
            <person name="Murphy L.D."/>
            <person name="Oliver K."/>
            <person name="Quail M.A."/>
            <person name="Rajandream M.A."/>
            <person name="Rutherford K.M."/>
            <person name="Rutter S."/>
            <person name="Seeger K."/>
            <person name="Simon S."/>
            <person name="Simmonds M."/>
            <person name="Skelton J."/>
            <person name="Squares R."/>
            <person name="Squares S."/>
            <person name="Stevens K."/>
            <person name="Taylor K."/>
            <person name="Whitehead S."/>
            <person name="Woodward J.R."/>
            <person name="Barrell B.G."/>
        </authorList>
    </citation>
    <scope>NUCLEOTIDE SEQUENCE [LARGE SCALE GENOMIC DNA]</scope>
    <source>
        <strain>TN</strain>
    </source>
</reference>
<comment type="function">
    <text evidence="1">Catalyzes the stereoinversion of LL-2,6-diaminopimelate (L,L-DAP) to meso-diaminopimelate (meso-DAP), a precursor of L-lysine and an essential component of the bacterial peptidoglycan.</text>
</comment>
<comment type="catalytic activity">
    <reaction evidence="1">
        <text>(2S,6S)-2,6-diaminopimelate = meso-2,6-diaminopimelate</text>
        <dbReference type="Rhea" id="RHEA:15393"/>
        <dbReference type="ChEBI" id="CHEBI:57609"/>
        <dbReference type="ChEBI" id="CHEBI:57791"/>
        <dbReference type="EC" id="5.1.1.7"/>
    </reaction>
</comment>
<comment type="pathway">
    <text evidence="1">Amino-acid biosynthesis; L-lysine biosynthesis via DAP pathway; DL-2,6-diaminopimelate from LL-2,6-diaminopimelate: step 1/1.</text>
</comment>
<comment type="subunit">
    <text evidence="1">Homodimer.</text>
</comment>
<comment type="subcellular location">
    <subcellularLocation>
        <location evidence="1">Cytoplasm</location>
    </subcellularLocation>
</comment>
<comment type="similarity">
    <text evidence="1">Belongs to the diaminopimelate epimerase family.</text>
</comment>
<protein>
    <recommendedName>
        <fullName evidence="1">Diaminopimelate epimerase</fullName>
        <shortName evidence="1">DAP epimerase</shortName>
        <ecNumber evidence="1">5.1.1.7</ecNumber>
    </recommendedName>
    <alternativeName>
        <fullName evidence="1">PLP-independent amino acid racemase</fullName>
    </alternativeName>
</protein>
<sequence length="296" mass="30640">MIFAKGHGTQNDFVVLPDVEADVTFTAAQVAALCNRRQGLGADGVLRVTTAGAAVTAGVLEHLPDGVSCSDWYMDYRNADGSVAQMCGNGVRVFAHYLRASGLESCDEFVVGSLAGPRLVNVHHVDELNADVTVDMGKANLLGSGGPAFAVTVGGRRFSGVAVDVGNPHLACMDPQLSLEELAALDLGAPVHLDRVQFPDGVNIEVLTAPVDGMVQMRVHERGVGETRSCGTGTVAAAVAALASAGADTGTLTVRVPGGDVVITITDVTSYLRGPSVLVAHGELADAWWYSLARSC</sequence>
<evidence type="ECO:0000255" key="1">
    <source>
        <dbReference type="HAMAP-Rule" id="MF_00197"/>
    </source>
</evidence>
<gene>
    <name evidence="1" type="primary">dapF</name>
    <name type="ordered locus">ML0996</name>
    <name type="ORF">B2235_C3_233</name>
</gene>
<dbReference type="EC" id="5.1.1.7" evidence="1"/>
<dbReference type="EMBL" id="U00019">
    <property type="protein sequence ID" value="AAA17279.1"/>
    <property type="molecule type" value="Genomic_DNA"/>
</dbReference>
<dbReference type="EMBL" id="AL583920">
    <property type="protein sequence ID" value="CAC31377.1"/>
    <property type="molecule type" value="Genomic_DNA"/>
</dbReference>
<dbReference type="PIR" id="S72943">
    <property type="entry name" value="S72943"/>
</dbReference>
<dbReference type="RefSeq" id="NP_301738.1">
    <property type="nucleotide sequence ID" value="NC_002677.1"/>
</dbReference>
<dbReference type="RefSeq" id="WP_010908062.1">
    <property type="nucleotide sequence ID" value="NC_002677.1"/>
</dbReference>
<dbReference type="SMR" id="P46814"/>
<dbReference type="STRING" id="272631.gene:17574822"/>
<dbReference type="KEGG" id="mle:ML0996"/>
<dbReference type="PATRIC" id="fig|272631.5.peg.1804"/>
<dbReference type="Leproma" id="ML0996"/>
<dbReference type="eggNOG" id="COG0253">
    <property type="taxonomic scope" value="Bacteria"/>
</dbReference>
<dbReference type="HOGENOM" id="CLU_053306_4_0_11"/>
<dbReference type="OrthoDB" id="9805408at2"/>
<dbReference type="UniPathway" id="UPA00034">
    <property type="reaction ID" value="UER00025"/>
</dbReference>
<dbReference type="Proteomes" id="UP000000806">
    <property type="component" value="Chromosome"/>
</dbReference>
<dbReference type="GO" id="GO:0005829">
    <property type="term" value="C:cytosol"/>
    <property type="evidence" value="ECO:0007669"/>
    <property type="project" value="TreeGrafter"/>
</dbReference>
<dbReference type="GO" id="GO:0008837">
    <property type="term" value="F:diaminopimelate epimerase activity"/>
    <property type="evidence" value="ECO:0007669"/>
    <property type="project" value="UniProtKB-UniRule"/>
</dbReference>
<dbReference type="GO" id="GO:0009089">
    <property type="term" value="P:lysine biosynthetic process via diaminopimelate"/>
    <property type="evidence" value="ECO:0007669"/>
    <property type="project" value="UniProtKB-UniRule"/>
</dbReference>
<dbReference type="Gene3D" id="3.10.310.10">
    <property type="entry name" value="Diaminopimelate Epimerase, Chain A, domain 1"/>
    <property type="match status" value="2"/>
</dbReference>
<dbReference type="HAMAP" id="MF_00197">
    <property type="entry name" value="DAP_epimerase"/>
    <property type="match status" value="1"/>
</dbReference>
<dbReference type="InterPro" id="IPR018510">
    <property type="entry name" value="DAP_epimerase_AS"/>
</dbReference>
<dbReference type="InterPro" id="IPR001653">
    <property type="entry name" value="DAP_epimerase_DapF"/>
</dbReference>
<dbReference type="NCBIfam" id="TIGR00652">
    <property type="entry name" value="DapF"/>
    <property type="match status" value="1"/>
</dbReference>
<dbReference type="PANTHER" id="PTHR31689:SF0">
    <property type="entry name" value="DIAMINOPIMELATE EPIMERASE"/>
    <property type="match status" value="1"/>
</dbReference>
<dbReference type="PANTHER" id="PTHR31689">
    <property type="entry name" value="DIAMINOPIMELATE EPIMERASE, CHLOROPLASTIC"/>
    <property type="match status" value="1"/>
</dbReference>
<dbReference type="Pfam" id="PF01678">
    <property type="entry name" value="DAP_epimerase"/>
    <property type="match status" value="2"/>
</dbReference>
<dbReference type="SUPFAM" id="SSF54506">
    <property type="entry name" value="Diaminopimelate epimerase-like"/>
    <property type="match status" value="2"/>
</dbReference>
<dbReference type="PROSITE" id="PS01326">
    <property type="entry name" value="DAP_EPIMERASE"/>
    <property type="match status" value="1"/>
</dbReference>
<organism>
    <name type="scientific">Mycobacterium leprae (strain TN)</name>
    <dbReference type="NCBI Taxonomy" id="272631"/>
    <lineage>
        <taxon>Bacteria</taxon>
        <taxon>Bacillati</taxon>
        <taxon>Actinomycetota</taxon>
        <taxon>Actinomycetes</taxon>
        <taxon>Mycobacteriales</taxon>
        <taxon>Mycobacteriaceae</taxon>
        <taxon>Mycobacterium</taxon>
    </lineage>
</organism>
<proteinExistence type="inferred from homology"/>
<accession>P46814</accession>
<feature type="chain" id="PRO_0000149852" description="Diaminopimelate epimerase">
    <location>
        <begin position="1"/>
        <end position="296"/>
    </location>
</feature>
<feature type="active site" description="Proton donor" evidence="1">
    <location>
        <position position="87"/>
    </location>
</feature>
<feature type="active site" description="Proton acceptor" evidence="1">
    <location>
        <position position="230"/>
    </location>
</feature>
<feature type="binding site" evidence="1">
    <location>
        <position position="11"/>
    </location>
    <ligand>
        <name>substrate</name>
    </ligand>
</feature>
<feature type="binding site" evidence="1">
    <location>
        <position position="78"/>
    </location>
    <ligand>
        <name>substrate</name>
    </ligand>
</feature>
<feature type="binding site" evidence="1">
    <location>
        <begin position="88"/>
        <end position="89"/>
    </location>
    <ligand>
        <name>substrate</name>
    </ligand>
</feature>
<feature type="binding site" evidence="1">
    <location>
        <position position="167"/>
    </location>
    <ligand>
        <name>substrate</name>
    </ligand>
</feature>
<feature type="binding site" evidence="1">
    <location>
        <position position="203"/>
    </location>
    <ligand>
        <name>substrate</name>
    </ligand>
</feature>
<feature type="binding site" evidence="1">
    <location>
        <begin position="221"/>
        <end position="222"/>
    </location>
    <ligand>
        <name>substrate</name>
    </ligand>
</feature>
<feature type="binding site" evidence="1">
    <location>
        <begin position="231"/>
        <end position="232"/>
    </location>
    <ligand>
        <name>substrate</name>
    </ligand>
</feature>
<feature type="site" description="Could be important to modulate the pK values of the two catalytic cysteine residues" evidence="1">
    <location>
        <position position="169"/>
    </location>
</feature>
<feature type="site" description="Could be important to modulate the pK values of the two catalytic cysteine residues" evidence="1">
    <location>
        <position position="221"/>
    </location>
</feature>
<keyword id="KW-0028">Amino-acid biosynthesis</keyword>
<keyword id="KW-0963">Cytoplasm</keyword>
<keyword id="KW-0413">Isomerase</keyword>
<keyword id="KW-0457">Lysine biosynthesis</keyword>
<keyword id="KW-1185">Reference proteome</keyword>